<dbReference type="EC" id="2.7.1.39" evidence="1"/>
<dbReference type="EMBL" id="AL766849">
    <property type="protein sequence ID" value="CAD46845.1"/>
    <property type="molecule type" value="Genomic_DNA"/>
</dbReference>
<dbReference type="RefSeq" id="WP_001220331.1">
    <property type="nucleotide sequence ID" value="NC_004368.1"/>
</dbReference>
<dbReference type="SMR" id="Q8E546"/>
<dbReference type="GeneID" id="66886044"/>
<dbReference type="KEGG" id="san:gbs1186"/>
<dbReference type="eggNOG" id="COG0083">
    <property type="taxonomic scope" value="Bacteria"/>
</dbReference>
<dbReference type="HOGENOM" id="CLU_041243_0_0_9"/>
<dbReference type="UniPathway" id="UPA00050">
    <property type="reaction ID" value="UER00064"/>
</dbReference>
<dbReference type="Proteomes" id="UP000000823">
    <property type="component" value="Chromosome"/>
</dbReference>
<dbReference type="GO" id="GO:0005737">
    <property type="term" value="C:cytoplasm"/>
    <property type="evidence" value="ECO:0007669"/>
    <property type="project" value="UniProtKB-SubCell"/>
</dbReference>
<dbReference type="GO" id="GO:0005524">
    <property type="term" value="F:ATP binding"/>
    <property type="evidence" value="ECO:0007669"/>
    <property type="project" value="UniProtKB-UniRule"/>
</dbReference>
<dbReference type="GO" id="GO:0004413">
    <property type="term" value="F:homoserine kinase activity"/>
    <property type="evidence" value="ECO:0007669"/>
    <property type="project" value="UniProtKB-UniRule"/>
</dbReference>
<dbReference type="GO" id="GO:0009088">
    <property type="term" value="P:threonine biosynthetic process"/>
    <property type="evidence" value="ECO:0007669"/>
    <property type="project" value="UniProtKB-UniRule"/>
</dbReference>
<dbReference type="Gene3D" id="3.30.230.10">
    <property type="match status" value="1"/>
</dbReference>
<dbReference type="Gene3D" id="3.30.70.890">
    <property type="entry name" value="GHMP kinase, C-terminal domain"/>
    <property type="match status" value="1"/>
</dbReference>
<dbReference type="HAMAP" id="MF_00384">
    <property type="entry name" value="Homoser_kinase"/>
    <property type="match status" value="1"/>
</dbReference>
<dbReference type="InterPro" id="IPR013750">
    <property type="entry name" value="GHMP_kinase_C_dom"/>
</dbReference>
<dbReference type="InterPro" id="IPR036554">
    <property type="entry name" value="GHMP_kinase_C_sf"/>
</dbReference>
<dbReference type="InterPro" id="IPR006204">
    <property type="entry name" value="GHMP_kinase_N_dom"/>
</dbReference>
<dbReference type="InterPro" id="IPR006203">
    <property type="entry name" value="GHMP_knse_ATP-bd_CS"/>
</dbReference>
<dbReference type="InterPro" id="IPR000870">
    <property type="entry name" value="Homoserine_kinase"/>
</dbReference>
<dbReference type="InterPro" id="IPR020568">
    <property type="entry name" value="Ribosomal_Su5_D2-typ_SF"/>
</dbReference>
<dbReference type="InterPro" id="IPR014721">
    <property type="entry name" value="Ribsml_uS5_D2-typ_fold_subgr"/>
</dbReference>
<dbReference type="NCBIfam" id="TIGR00191">
    <property type="entry name" value="thrB"/>
    <property type="match status" value="1"/>
</dbReference>
<dbReference type="PANTHER" id="PTHR20861:SF1">
    <property type="entry name" value="HOMOSERINE KINASE"/>
    <property type="match status" value="1"/>
</dbReference>
<dbReference type="PANTHER" id="PTHR20861">
    <property type="entry name" value="HOMOSERINE/4-DIPHOSPHOCYTIDYL-2-C-METHYL-D-ERYTHRITOL KINASE"/>
    <property type="match status" value="1"/>
</dbReference>
<dbReference type="Pfam" id="PF08544">
    <property type="entry name" value="GHMP_kinases_C"/>
    <property type="match status" value="1"/>
</dbReference>
<dbReference type="Pfam" id="PF00288">
    <property type="entry name" value="GHMP_kinases_N"/>
    <property type="match status" value="1"/>
</dbReference>
<dbReference type="PIRSF" id="PIRSF000676">
    <property type="entry name" value="Homoser_kin"/>
    <property type="match status" value="1"/>
</dbReference>
<dbReference type="PRINTS" id="PR00958">
    <property type="entry name" value="HOMSERKINASE"/>
</dbReference>
<dbReference type="SUPFAM" id="SSF55060">
    <property type="entry name" value="GHMP Kinase, C-terminal domain"/>
    <property type="match status" value="1"/>
</dbReference>
<dbReference type="SUPFAM" id="SSF54211">
    <property type="entry name" value="Ribosomal protein S5 domain 2-like"/>
    <property type="match status" value="1"/>
</dbReference>
<dbReference type="PROSITE" id="PS00627">
    <property type="entry name" value="GHMP_KINASES_ATP"/>
    <property type="match status" value="1"/>
</dbReference>
<comment type="function">
    <text evidence="1">Catalyzes the ATP-dependent phosphorylation of L-homoserine to L-homoserine phosphate.</text>
</comment>
<comment type="catalytic activity">
    <reaction evidence="1">
        <text>L-homoserine + ATP = O-phospho-L-homoserine + ADP + H(+)</text>
        <dbReference type="Rhea" id="RHEA:13985"/>
        <dbReference type="ChEBI" id="CHEBI:15378"/>
        <dbReference type="ChEBI" id="CHEBI:30616"/>
        <dbReference type="ChEBI" id="CHEBI:57476"/>
        <dbReference type="ChEBI" id="CHEBI:57590"/>
        <dbReference type="ChEBI" id="CHEBI:456216"/>
        <dbReference type="EC" id="2.7.1.39"/>
    </reaction>
</comment>
<comment type="pathway">
    <text evidence="1">Amino-acid biosynthesis; L-threonine biosynthesis; L-threonine from L-aspartate: step 4/5.</text>
</comment>
<comment type="subcellular location">
    <subcellularLocation>
        <location evidence="1">Cytoplasm</location>
    </subcellularLocation>
</comment>
<comment type="similarity">
    <text evidence="1">Belongs to the GHMP kinase family. Homoserine kinase subfamily.</text>
</comment>
<gene>
    <name evidence="1" type="primary">thrB</name>
    <name type="ordered locus">gbs1186</name>
</gene>
<reference key="1">
    <citation type="journal article" date="2002" name="Mol. Microbiol.">
        <title>Genome sequence of Streptococcus agalactiae, a pathogen causing invasive neonatal disease.</title>
        <authorList>
            <person name="Glaser P."/>
            <person name="Rusniok C."/>
            <person name="Buchrieser C."/>
            <person name="Chevalier F."/>
            <person name="Frangeul L."/>
            <person name="Msadek T."/>
            <person name="Zouine M."/>
            <person name="Couve E."/>
            <person name="Lalioui L."/>
            <person name="Poyart C."/>
            <person name="Trieu-Cuot P."/>
            <person name="Kunst F."/>
        </authorList>
    </citation>
    <scope>NUCLEOTIDE SEQUENCE [LARGE SCALE GENOMIC DNA]</scope>
    <source>
        <strain>NEM316</strain>
    </source>
</reference>
<accession>Q8E546</accession>
<sequence length="288" mass="31474">MRIIVPATSANIGPGFDSIGVALSKYLSIEVLEESTEWLVEHNLVNIPKDHTNLLIQTALHVKSDLAPHRLKMFSDIPLARGLGSSSSVIVAGIELANQLGNLALSQKEKLEIATRLEGHPDNVAPAIFGDLVISSIVKNDIKSLEVMFPDSSFIAFIPNYELKTSDSRNVLPQKLSYEDAVASSSVANVMVASLLKGDLVTAGWAIERDLFHERYRQPLVKEFGVIKQISTQNGAYATYLSGAGPTVMVLCSKEKEQPIVTELSKLCLDGQIQVLNIERKGVRVEKR</sequence>
<proteinExistence type="inferred from homology"/>
<name>KHSE_STRA3</name>
<organism>
    <name type="scientific">Streptococcus agalactiae serotype III (strain NEM316)</name>
    <dbReference type="NCBI Taxonomy" id="211110"/>
    <lineage>
        <taxon>Bacteria</taxon>
        <taxon>Bacillati</taxon>
        <taxon>Bacillota</taxon>
        <taxon>Bacilli</taxon>
        <taxon>Lactobacillales</taxon>
        <taxon>Streptococcaceae</taxon>
        <taxon>Streptococcus</taxon>
    </lineage>
</organism>
<evidence type="ECO:0000255" key="1">
    <source>
        <dbReference type="HAMAP-Rule" id="MF_00384"/>
    </source>
</evidence>
<feature type="chain" id="PRO_0000156614" description="Homoserine kinase">
    <location>
        <begin position="1"/>
        <end position="288"/>
    </location>
</feature>
<feature type="binding site" evidence="1">
    <location>
        <begin position="78"/>
        <end position="88"/>
    </location>
    <ligand>
        <name>ATP</name>
        <dbReference type="ChEBI" id="CHEBI:30616"/>
    </ligand>
</feature>
<keyword id="KW-0028">Amino-acid biosynthesis</keyword>
<keyword id="KW-0067">ATP-binding</keyword>
<keyword id="KW-0963">Cytoplasm</keyword>
<keyword id="KW-0418">Kinase</keyword>
<keyword id="KW-0547">Nucleotide-binding</keyword>
<keyword id="KW-0791">Threonine biosynthesis</keyword>
<keyword id="KW-0808">Transferase</keyword>
<protein>
    <recommendedName>
        <fullName evidence="1">Homoserine kinase</fullName>
        <shortName evidence="1">HK</shortName>
        <shortName evidence="1">HSK</shortName>
        <ecNumber evidence="1">2.7.1.39</ecNumber>
    </recommendedName>
</protein>